<keyword id="KW-0030">Aminoacyl-tRNA synthetase</keyword>
<keyword id="KW-0067">ATP-binding</keyword>
<keyword id="KW-0963">Cytoplasm</keyword>
<keyword id="KW-0436">Ligase</keyword>
<keyword id="KW-0547">Nucleotide-binding</keyword>
<keyword id="KW-0648">Protein biosynthesis</keyword>
<sequence length="437" mass="49906">MKEQKLTTENYKGTRDFYPEDMRLRNYLFSVMKDVVRSYGYEEYDGPMVESLDLYRAKTGEEIVGKQIYNFIDKGDREVAIRPEMTPTVARMVAKKLRELPRPIRWFSIPNLWRYEQPGHGRLREHWQLNVDMFGVTSSRAELEILSLACDILFAFGAPKNSFKVTISHRSLLDEFLLDGLKVSPNQAHEVSKILDKKNKITQDEYVALVTKTIPNDSSAVSKIDLFLNATVNSLNQIPGIKEETLAAIKGLFEDIKTIGLSDIIHFDPSVVRGFDYYTGFIFEIFDTSPQNKRSLYGGGRYDNLIGLFSNEELTGIGFGLGDVTLQNFLTAHNLLPNFASDTTVFIPLLDDSSFAENHNFAKELRKEKISAEVSLVSQKMGKQLSYAEKKGYRWILLRGEDEIKTNTVTLKDMASRNQFTFSFSEALQKIKEELSK</sequence>
<proteinExistence type="inferred from homology"/>
<feature type="chain" id="PRO_1000095567" description="Histidine--tRNA ligase">
    <location>
        <begin position="1"/>
        <end position="437"/>
    </location>
</feature>
<gene>
    <name evidence="1" type="primary">hisS</name>
    <name type="ordered locus">LBF_3124</name>
</gene>
<evidence type="ECO:0000255" key="1">
    <source>
        <dbReference type="HAMAP-Rule" id="MF_00127"/>
    </source>
</evidence>
<protein>
    <recommendedName>
        <fullName evidence="1">Histidine--tRNA ligase</fullName>
        <ecNumber evidence="1">6.1.1.21</ecNumber>
    </recommendedName>
    <alternativeName>
        <fullName evidence="1">Histidyl-tRNA synthetase</fullName>
        <shortName evidence="1">HisRS</shortName>
    </alternativeName>
</protein>
<dbReference type="EC" id="6.1.1.21" evidence="1"/>
<dbReference type="EMBL" id="CP000777">
    <property type="protein sequence ID" value="ABZ95593.1"/>
    <property type="molecule type" value="Genomic_DNA"/>
</dbReference>
<dbReference type="RefSeq" id="WP_012390157.1">
    <property type="nucleotide sequence ID" value="NC_010842.1"/>
</dbReference>
<dbReference type="SMR" id="B0SH39"/>
<dbReference type="KEGG" id="lbf:LBF_3124"/>
<dbReference type="HOGENOM" id="CLU_025113_3_1_12"/>
<dbReference type="GO" id="GO:0005737">
    <property type="term" value="C:cytoplasm"/>
    <property type="evidence" value="ECO:0007669"/>
    <property type="project" value="UniProtKB-SubCell"/>
</dbReference>
<dbReference type="GO" id="GO:0005524">
    <property type="term" value="F:ATP binding"/>
    <property type="evidence" value="ECO:0007669"/>
    <property type="project" value="UniProtKB-UniRule"/>
</dbReference>
<dbReference type="GO" id="GO:0004821">
    <property type="term" value="F:histidine-tRNA ligase activity"/>
    <property type="evidence" value="ECO:0007669"/>
    <property type="project" value="UniProtKB-UniRule"/>
</dbReference>
<dbReference type="GO" id="GO:0006427">
    <property type="term" value="P:histidyl-tRNA aminoacylation"/>
    <property type="evidence" value="ECO:0007669"/>
    <property type="project" value="UniProtKB-UniRule"/>
</dbReference>
<dbReference type="CDD" id="cd00773">
    <property type="entry name" value="HisRS-like_core"/>
    <property type="match status" value="1"/>
</dbReference>
<dbReference type="CDD" id="cd00859">
    <property type="entry name" value="HisRS_anticodon"/>
    <property type="match status" value="1"/>
</dbReference>
<dbReference type="Gene3D" id="3.40.50.800">
    <property type="entry name" value="Anticodon-binding domain"/>
    <property type="match status" value="1"/>
</dbReference>
<dbReference type="Gene3D" id="3.30.930.10">
    <property type="entry name" value="Bira Bifunctional Protein, Domain 2"/>
    <property type="match status" value="1"/>
</dbReference>
<dbReference type="HAMAP" id="MF_00127">
    <property type="entry name" value="His_tRNA_synth"/>
    <property type="match status" value="1"/>
</dbReference>
<dbReference type="InterPro" id="IPR006195">
    <property type="entry name" value="aa-tRNA-synth_II"/>
</dbReference>
<dbReference type="InterPro" id="IPR045864">
    <property type="entry name" value="aa-tRNA-synth_II/BPL/LPL"/>
</dbReference>
<dbReference type="InterPro" id="IPR004154">
    <property type="entry name" value="Anticodon-bd"/>
</dbReference>
<dbReference type="InterPro" id="IPR036621">
    <property type="entry name" value="Anticodon-bd_dom_sf"/>
</dbReference>
<dbReference type="InterPro" id="IPR015807">
    <property type="entry name" value="His-tRNA-ligase"/>
</dbReference>
<dbReference type="InterPro" id="IPR041715">
    <property type="entry name" value="HisRS-like_core"/>
</dbReference>
<dbReference type="InterPro" id="IPR004516">
    <property type="entry name" value="HisRS/HisZ"/>
</dbReference>
<dbReference type="InterPro" id="IPR033656">
    <property type="entry name" value="HisRS_anticodon"/>
</dbReference>
<dbReference type="NCBIfam" id="TIGR00442">
    <property type="entry name" value="hisS"/>
    <property type="match status" value="1"/>
</dbReference>
<dbReference type="PANTHER" id="PTHR43707:SF1">
    <property type="entry name" value="HISTIDINE--TRNA LIGASE, MITOCHONDRIAL-RELATED"/>
    <property type="match status" value="1"/>
</dbReference>
<dbReference type="PANTHER" id="PTHR43707">
    <property type="entry name" value="HISTIDYL-TRNA SYNTHETASE"/>
    <property type="match status" value="1"/>
</dbReference>
<dbReference type="Pfam" id="PF03129">
    <property type="entry name" value="HGTP_anticodon"/>
    <property type="match status" value="1"/>
</dbReference>
<dbReference type="Pfam" id="PF13393">
    <property type="entry name" value="tRNA-synt_His"/>
    <property type="match status" value="1"/>
</dbReference>
<dbReference type="PIRSF" id="PIRSF001549">
    <property type="entry name" value="His-tRNA_synth"/>
    <property type="match status" value="1"/>
</dbReference>
<dbReference type="SUPFAM" id="SSF52954">
    <property type="entry name" value="Class II aaRS ABD-related"/>
    <property type="match status" value="1"/>
</dbReference>
<dbReference type="SUPFAM" id="SSF55681">
    <property type="entry name" value="Class II aaRS and biotin synthetases"/>
    <property type="match status" value="1"/>
</dbReference>
<dbReference type="PROSITE" id="PS50862">
    <property type="entry name" value="AA_TRNA_LIGASE_II"/>
    <property type="match status" value="1"/>
</dbReference>
<comment type="catalytic activity">
    <reaction evidence="1">
        <text>tRNA(His) + L-histidine + ATP = L-histidyl-tRNA(His) + AMP + diphosphate + H(+)</text>
        <dbReference type="Rhea" id="RHEA:17313"/>
        <dbReference type="Rhea" id="RHEA-COMP:9665"/>
        <dbReference type="Rhea" id="RHEA-COMP:9689"/>
        <dbReference type="ChEBI" id="CHEBI:15378"/>
        <dbReference type="ChEBI" id="CHEBI:30616"/>
        <dbReference type="ChEBI" id="CHEBI:33019"/>
        <dbReference type="ChEBI" id="CHEBI:57595"/>
        <dbReference type="ChEBI" id="CHEBI:78442"/>
        <dbReference type="ChEBI" id="CHEBI:78527"/>
        <dbReference type="ChEBI" id="CHEBI:456215"/>
        <dbReference type="EC" id="6.1.1.21"/>
    </reaction>
</comment>
<comment type="subunit">
    <text evidence="1">Homodimer.</text>
</comment>
<comment type="subcellular location">
    <subcellularLocation>
        <location evidence="1">Cytoplasm</location>
    </subcellularLocation>
</comment>
<comment type="similarity">
    <text evidence="1">Belongs to the class-II aminoacyl-tRNA synthetase family.</text>
</comment>
<accession>B0SH39</accession>
<reference key="1">
    <citation type="journal article" date="2008" name="PLoS ONE">
        <title>Genome sequence of the saprophyte Leptospira biflexa provides insights into the evolution of Leptospira and the pathogenesis of leptospirosis.</title>
        <authorList>
            <person name="Picardeau M."/>
            <person name="Bulach D.M."/>
            <person name="Bouchier C."/>
            <person name="Zuerner R.L."/>
            <person name="Zidane N."/>
            <person name="Wilson P.J."/>
            <person name="Creno S."/>
            <person name="Kuczek E.S."/>
            <person name="Bommezzadri S."/>
            <person name="Davis J.C."/>
            <person name="McGrath A."/>
            <person name="Johnson M.J."/>
            <person name="Boursaux-Eude C."/>
            <person name="Seemann T."/>
            <person name="Rouy Z."/>
            <person name="Coppel R.L."/>
            <person name="Rood J.I."/>
            <person name="Lajus A."/>
            <person name="Davies J.K."/>
            <person name="Medigue C."/>
            <person name="Adler B."/>
        </authorList>
    </citation>
    <scope>NUCLEOTIDE SEQUENCE [LARGE SCALE GENOMIC DNA]</scope>
    <source>
        <strain>Patoc 1 / Ames</strain>
    </source>
</reference>
<name>SYH_LEPBA</name>
<organism>
    <name type="scientific">Leptospira biflexa serovar Patoc (strain Patoc 1 / Ames)</name>
    <dbReference type="NCBI Taxonomy" id="355278"/>
    <lineage>
        <taxon>Bacteria</taxon>
        <taxon>Pseudomonadati</taxon>
        <taxon>Spirochaetota</taxon>
        <taxon>Spirochaetia</taxon>
        <taxon>Leptospirales</taxon>
        <taxon>Leptospiraceae</taxon>
        <taxon>Leptospira</taxon>
    </lineage>
</organism>